<organism>
    <name type="scientific">Homo sapiens</name>
    <name type="common">Human</name>
    <dbReference type="NCBI Taxonomy" id="9606"/>
    <lineage>
        <taxon>Eukaryota</taxon>
        <taxon>Metazoa</taxon>
        <taxon>Chordata</taxon>
        <taxon>Craniata</taxon>
        <taxon>Vertebrata</taxon>
        <taxon>Euteleostomi</taxon>
        <taxon>Mammalia</taxon>
        <taxon>Eutheria</taxon>
        <taxon>Euarchontoglires</taxon>
        <taxon>Primates</taxon>
        <taxon>Haplorrhini</taxon>
        <taxon>Catarrhini</taxon>
        <taxon>Hominidae</taxon>
        <taxon>Homo</taxon>
    </lineage>
</organism>
<evidence type="ECO:0000250" key="1">
    <source>
        <dbReference type="UniProtKB" id="Q5SZ99"/>
    </source>
</evidence>
<evidence type="ECO:0000255" key="2">
    <source>
        <dbReference type="PROSITE-ProRule" id="PRU00024"/>
    </source>
</evidence>
<evidence type="ECO:0000255" key="3">
    <source>
        <dbReference type="PROSITE-ProRule" id="PRU00175"/>
    </source>
</evidence>
<evidence type="ECO:0000255" key="4">
    <source>
        <dbReference type="PROSITE-ProRule" id="PRU00548"/>
    </source>
</evidence>
<evidence type="ECO:0000269" key="5">
    <source>
    </source>
</evidence>
<evidence type="ECO:0000269" key="6">
    <source>
    </source>
</evidence>
<evidence type="ECO:0000269" key="7">
    <source>
    </source>
</evidence>
<evidence type="ECO:0000303" key="8">
    <source>
    </source>
</evidence>
<evidence type="ECO:0000303" key="9">
    <source>
    </source>
</evidence>
<evidence type="ECO:0000305" key="10"/>
<evidence type="ECO:0000305" key="11">
    <source>
    </source>
</evidence>
<evidence type="ECO:0000312" key="12">
    <source>
        <dbReference type="HGNC" id="HGNC:10059"/>
    </source>
</evidence>
<evidence type="ECO:0007744" key="13">
    <source>
    </source>
</evidence>
<name>TRI38_HUMAN</name>
<accession>O00635</accession>
<accession>B2R862</accession>
<protein>
    <recommendedName>
        <fullName evidence="10">E3 ubiquitin-protein ligase TRIM38</fullName>
        <ecNumber evidence="11">2.3.2.27</ecNumber>
    </recommendedName>
    <alternativeName>
        <fullName>RING finger protein 15</fullName>
    </alternativeName>
    <alternativeName>
        <fullName evidence="10">Tripartite motif-containing protein 38</fullName>
    </alternativeName>
    <alternativeName>
        <fullName evidence="9">Zinc finger protein RoRet</fullName>
    </alternativeName>
</protein>
<gene>
    <name evidence="8 12" type="primary">TRIM38</name>
    <name type="synonym">RNF15</name>
    <name evidence="9" type="synonym">RORET</name>
</gene>
<reference key="1">
    <citation type="journal article" date="1997" name="Genome Res.">
        <title>A 1.1-Mb transcript map of the hereditary hemochromatosis locus.</title>
        <authorList>
            <person name="Ruddy D.A."/>
            <person name="Kronmal G.S."/>
            <person name="Lee V.K."/>
            <person name="Mintier G.A."/>
            <person name="Quintana L."/>
            <person name="Domingo R. Jr."/>
            <person name="Meyer N.C."/>
            <person name="Irrinki A."/>
            <person name="McClelland E.E."/>
            <person name="Fullan A."/>
            <person name="Mapa F.A."/>
            <person name="Moore T."/>
            <person name="Thomas W."/>
            <person name="Loeb D.B."/>
            <person name="Harmon C."/>
            <person name="Tsuchihashi Z."/>
            <person name="Wolff R.K."/>
            <person name="Schatzman R.C."/>
            <person name="Feder J.N."/>
        </authorList>
    </citation>
    <scope>NUCLEOTIDE SEQUENCE [GENOMIC DNA / MRNA]</scope>
</reference>
<reference key="2">
    <citation type="journal article" date="2004" name="Nat. Genet.">
        <title>Complete sequencing and characterization of 21,243 full-length human cDNAs.</title>
        <authorList>
            <person name="Ota T."/>
            <person name="Suzuki Y."/>
            <person name="Nishikawa T."/>
            <person name="Otsuki T."/>
            <person name="Sugiyama T."/>
            <person name="Irie R."/>
            <person name="Wakamatsu A."/>
            <person name="Hayashi K."/>
            <person name="Sato H."/>
            <person name="Nagai K."/>
            <person name="Kimura K."/>
            <person name="Makita H."/>
            <person name="Sekine M."/>
            <person name="Obayashi M."/>
            <person name="Nishi T."/>
            <person name="Shibahara T."/>
            <person name="Tanaka T."/>
            <person name="Ishii S."/>
            <person name="Yamamoto J."/>
            <person name="Saito K."/>
            <person name="Kawai Y."/>
            <person name="Isono Y."/>
            <person name="Nakamura Y."/>
            <person name="Nagahari K."/>
            <person name="Murakami K."/>
            <person name="Yasuda T."/>
            <person name="Iwayanagi T."/>
            <person name="Wagatsuma M."/>
            <person name="Shiratori A."/>
            <person name="Sudo H."/>
            <person name="Hosoiri T."/>
            <person name="Kaku Y."/>
            <person name="Kodaira H."/>
            <person name="Kondo H."/>
            <person name="Sugawara M."/>
            <person name="Takahashi M."/>
            <person name="Kanda K."/>
            <person name="Yokoi T."/>
            <person name="Furuya T."/>
            <person name="Kikkawa E."/>
            <person name="Omura Y."/>
            <person name="Abe K."/>
            <person name="Kamihara K."/>
            <person name="Katsuta N."/>
            <person name="Sato K."/>
            <person name="Tanikawa M."/>
            <person name="Yamazaki M."/>
            <person name="Ninomiya K."/>
            <person name="Ishibashi T."/>
            <person name="Yamashita H."/>
            <person name="Murakawa K."/>
            <person name="Fujimori K."/>
            <person name="Tanai H."/>
            <person name="Kimata M."/>
            <person name="Watanabe M."/>
            <person name="Hiraoka S."/>
            <person name="Chiba Y."/>
            <person name="Ishida S."/>
            <person name="Ono Y."/>
            <person name="Takiguchi S."/>
            <person name="Watanabe S."/>
            <person name="Yosida M."/>
            <person name="Hotuta T."/>
            <person name="Kusano J."/>
            <person name="Kanehori K."/>
            <person name="Takahashi-Fujii A."/>
            <person name="Hara H."/>
            <person name="Tanase T.-O."/>
            <person name="Nomura Y."/>
            <person name="Togiya S."/>
            <person name="Komai F."/>
            <person name="Hara R."/>
            <person name="Takeuchi K."/>
            <person name="Arita M."/>
            <person name="Imose N."/>
            <person name="Musashino K."/>
            <person name="Yuuki H."/>
            <person name="Oshima A."/>
            <person name="Sasaki N."/>
            <person name="Aotsuka S."/>
            <person name="Yoshikawa Y."/>
            <person name="Matsunawa H."/>
            <person name="Ichihara T."/>
            <person name="Shiohata N."/>
            <person name="Sano S."/>
            <person name="Moriya S."/>
            <person name="Momiyama H."/>
            <person name="Satoh N."/>
            <person name="Takami S."/>
            <person name="Terashima Y."/>
            <person name="Suzuki O."/>
            <person name="Nakagawa S."/>
            <person name="Senoh A."/>
            <person name="Mizoguchi H."/>
            <person name="Goto Y."/>
            <person name="Shimizu F."/>
            <person name="Wakebe H."/>
            <person name="Hishigaki H."/>
            <person name="Watanabe T."/>
            <person name="Sugiyama A."/>
            <person name="Takemoto M."/>
            <person name="Kawakami B."/>
            <person name="Yamazaki M."/>
            <person name="Watanabe K."/>
            <person name="Kumagai A."/>
            <person name="Itakura S."/>
            <person name="Fukuzumi Y."/>
            <person name="Fujimori Y."/>
            <person name="Komiyama M."/>
            <person name="Tashiro H."/>
            <person name="Tanigami A."/>
            <person name="Fujiwara T."/>
            <person name="Ono T."/>
            <person name="Yamada K."/>
            <person name="Fujii Y."/>
            <person name="Ozaki K."/>
            <person name="Hirao M."/>
            <person name="Ohmori Y."/>
            <person name="Kawabata A."/>
            <person name="Hikiji T."/>
            <person name="Kobatake N."/>
            <person name="Inagaki H."/>
            <person name="Ikema Y."/>
            <person name="Okamoto S."/>
            <person name="Okitani R."/>
            <person name="Kawakami T."/>
            <person name="Noguchi S."/>
            <person name="Itoh T."/>
            <person name="Shigeta K."/>
            <person name="Senba T."/>
            <person name="Matsumura K."/>
            <person name="Nakajima Y."/>
            <person name="Mizuno T."/>
            <person name="Morinaga M."/>
            <person name="Sasaki M."/>
            <person name="Togashi T."/>
            <person name="Oyama M."/>
            <person name="Hata H."/>
            <person name="Watanabe M."/>
            <person name="Komatsu T."/>
            <person name="Mizushima-Sugano J."/>
            <person name="Satoh T."/>
            <person name="Shirai Y."/>
            <person name="Takahashi Y."/>
            <person name="Nakagawa K."/>
            <person name="Okumura K."/>
            <person name="Nagase T."/>
            <person name="Nomura N."/>
            <person name="Kikuchi H."/>
            <person name="Masuho Y."/>
            <person name="Yamashita R."/>
            <person name="Nakai K."/>
            <person name="Yada T."/>
            <person name="Nakamura Y."/>
            <person name="Ohara O."/>
            <person name="Isogai T."/>
            <person name="Sugano S."/>
        </authorList>
    </citation>
    <scope>NUCLEOTIDE SEQUENCE [LARGE SCALE MRNA]</scope>
</reference>
<reference key="3">
    <citation type="journal article" date="2004" name="Genome Res.">
        <title>The status, quality, and expansion of the NIH full-length cDNA project: the Mammalian Gene Collection (MGC).</title>
        <authorList>
            <consortium name="The MGC Project Team"/>
        </authorList>
    </citation>
    <scope>NUCLEOTIDE SEQUENCE [LARGE SCALE MRNA]</scope>
    <source>
        <tissue>Lung</tissue>
    </source>
</reference>
<reference key="4">
    <citation type="journal article" date="2011" name="BMC Syst. Biol.">
        <title>Initial characterization of the human central proteome.</title>
        <authorList>
            <person name="Burkard T.R."/>
            <person name="Planyavsky M."/>
            <person name="Kaupe I."/>
            <person name="Breitwieser F.P."/>
            <person name="Buerckstuemmer T."/>
            <person name="Bennett K.L."/>
            <person name="Superti-Furga G."/>
            <person name="Colinge J."/>
        </authorList>
    </citation>
    <scope>IDENTIFICATION BY MASS SPECTROMETRY [LARGE SCALE ANALYSIS]</scope>
</reference>
<reference key="5">
    <citation type="journal article" date="2012" name="PLoS ONE">
        <title>TRIM38 negatively regulates TLR3-mediated IFN-beta signaling by targeting TRIF for degradation.</title>
        <authorList>
            <person name="Xue Q."/>
            <person name="Zhou Z."/>
            <person name="Lei X."/>
            <person name="Liu X."/>
            <person name="He B."/>
            <person name="Wang J."/>
            <person name="Hung T."/>
        </authorList>
    </citation>
    <scope>FUNCTION</scope>
    <scope>CATALYTIC ACTIVITY</scope>
    <scope>PATHWAY</scope>
</reference>
<reference key="6">
    <citation type="journal article" date="2014" name="J. Proteomics">
        <title>An enzyme assisted RP-RPLC approach for in-depth analysis of human liver phosphoproteome.</title>
        <authorList>
            <person name="Bian Y."/>
            <person name="Song C."/>
            <person name="Cheng K."/>
            <person name="Dong M."/>
            <person name="Wang F."/>
            <person name="Huang J."/>
            <person name="Sun D."/>
            <person name="Wang L."/>
            <person name="Ye M."/>
            <person name="Zou H."/>
        </authorList>
    </citation>
    <scope>PHOSPHORYLATION [LARGE SCALE ANALYSIS] AT SER-70</scope>
    <scope>IDENTIFICATION BY MASS SPECTROMETRY [LARGE SCALE ANALYSIS]</scope>
    <source>
        <tissue>Liver</tissue>
    </source>
</reference>
<reference key="7">
    <citation type="journal article" date="2014" name="Proc. Natl. Acad. Sci. U.S.A.">
        <title>TRIM38 inhibits TNFalpha- and IL-1beta-triggered NF-kappaB activation by mediating lysosome-dependent degradation of TAB2/3.</title>
        <authorList>
            <person name="Hu M.M."/>
            <person name="Yang Q."/>
            <person name="Zhang J."/>
            <person name="Liu S.M."/>
            <person name="Zhang Y."/>
            <person name="Lin H."/>
            <person name="Huang Z.F."/>
            <person name="Wang Y.Y."/>
            <person name="Zhang X.D."/>
            <person name="Zhong B."/>
            <person name="Shu H.B."/>
        </authorList>
    </citation>
    <scope>FUNCTION</scope>
    <scope>INTERACTION WITH TAB2 AND TAB3</scope>
</reference>
<feature type="chain" id="PRO_0000056256" description="E3 ubiquitin-protein ligase TRIM38">
    <location>
        <begin position="1"/>
        <end position="465"/>
    </location>
</feature>
<feature type="domain" description="B30.2/SPRY" evidence="4">
    <location>
        <begin position="274"/>
        <end position="465"/>
    </location>
</feature>
<feature type="zinc finger region" description="RING-type" evidence="3">
    <location>
        <begin position="16"/>
        <end position="63"/>
    </location>
</feature>
<feature type="zinc finger region" description="B box-type" evidence="2">
    <location>
        <begin position="88"/>
        <end position="129"/>
    </location>
</feature>
<feature type="binding site" evidence="2">
    <location>
        <position position="93"/>
    </location>
    <ligand>
        <name>Zn(2+)</name>
        <dbReference type="ChEBI" id="CHEBI:29105"/>
    </ligand>
</feature>
<feature type="binding site" evidence="2">
    <location>
        <position position="96"/>
    </location>
    <ligand>
        <name>Zn(2+)</name>
        <dbReference type="ChEBI" id="CHEBI:29105"/>
    </ligand>
</feature>
<feature type="binding site" evidence="2">
    <location>
        <position position="115"/>
    </location>
    <ligand>
        <name>Zn(2+)</name>
        <dbReference type="ChEBI" id="CHEBI:29105"/>
    </ligand>
</feature>
<feature type="binding site" evidence="2">
    <location>
        <position position="121"/>
    </location>
    <ligand>
        <name>Zn(2+)</name>
        <dbReference type="ChEBI" id="CHEBI:29105"/>
    </ligand>
</feature>
<feature type="modified residue" description="Phosphoserine" evidence="13">
    <location>
        <position position="70"/>
    </location>
</feature>
<feature type="sequence variant" id="VAR_013513" description="In dbSNP:rs10317.">
    <original>G</original>
    <variation>R</variation>
    <location>
        <position position="421"/>
    </location>
</feature>
<feature type="sequence conflict" description="In Ref. 3; AAH26930." evidence="10" ref="3">
    <original>M</original>
    <variation>I</variation>
    <location>
        <position position="23"/>
    </location>
</feature>
<feature type="sequence conflict" description="In Ref. 2; BAG36059." evidence="10" ref="2">
    <original>L</original>
    <variation>P</variation>
    <location>
        <position position="411"/>
    </location>
</feature>
<comment type="function">
    <text evidence="1 5 6">E3 ubiquitin-protein and E3 SUMO-protein ligase that acts as a regulator of innate immunity (PubMed:23056470). Acts as a negative regulator of type I interferon IFN-beta production by catalyzing 'Lys-48'-linked polyubiquitination of AZI2/NAP1, leading to its degradation (By similarity). Mediates 'Lys-48'-linked polyubiquitination and proteasomal degradation of the critical TLR adapter TICAM1, inhibiting TLR3-mediated type I interferon signaling (PubMed:23056470). Acts as positive regulator of the cGAS-STING pathway by acting as a E3 SUMO-protein ligase: mediates sumoylation of CGAS and STING, preventing their degradation and thereby activating the innate immune response to DNA virus (By similarity). Also acts as a negative regulator of NF-kappa-B signaling independently of its E3 protein ligase activity by promoting lysosome-dependent degradation of TAB2 and TAB3 adapters (PubMed:24434549).</text>
</comment>
<comment type="catalytic activity">
    <reaction evidence="11">
        <text>S-ubiquitinyl-[E2 ubiquitin-conjugating enzyme]-L-cysteine + [acceptor protein]-L-lysine = [E2 ubiquitin-conjugating enzyme]-L-cysteine + N(6)-ubiquitinyl-[acceptor protein]-L-lysine.</text>
        <dbReference type="EC" id="2.3.2.27"/>
    </reaction>
</comment>
<comment type="pathway">
    <text evidence="5">Protein modification; protein ubiquitination.</text>
</comment>
<comment type="pathway">
    <text evidence="1">Protein modification; protein sumoylation.</text>
</comment>
<comment type="subunit">
    <text evidence="1">Interacts (via B30.2/SPRY domain) with TAB2 and TAB3.</text>
</comment>
<comment type="interaction">
    <interactant intactId="EBI-2130415">
        <id>O00635</id>
    </interactant>
    <interactant intactId="EBI-930964">
        <id>P54253</id>
        <label>ATXN1</label>
    </interactant>
    <organismsDiffer>false</organismsDiffer>
    <experiments>5</experiments>
</comment>
<comment type="interaction">
    <interactant intactId="EBI-2130415">
        <id>O00635</id>
    </interactant>
    <interactant intactId="EBI-358049">
        <id>Q13895</id>
        <label>BYSL</label>
    </interactant>
    <organismsDiffer>false</organismsDiffer>
    <experiments>3</experiments>
</comment>
<comment type="interaction">
    <interactant intactId="EBI-2130415">
        <id>O00635</id>
    </interactant>
    <interactant intactId="EBI-10172181">
        <id>Q53SE7</id>
        <label>FLJ13057</label>
    </interactant>
    <organismsDiffer>false</organismsDiffer>
    <experiments>3</experiments>
</comment>
<comment type="interaction">
    <interactant intactId="EBI-2130415">
        <id>O00635</id>
    </interactant>
    <interactant intactId="EBI-10249571">
        <id>Q6FG85</id>
        <label>GC20</label>
    </interactant>
    <organismsDiffer>false</organismsDiffer>
    <experiments>3</experiments>
</comment>
<comment type="interaction">
    <interactant intactId="EBI-2130415">
        <id>O00635</id>
    </interactant>
    <interactant intactId="EBI-739467">
        <id>Q9H8Y8</id>
        <label>GORASP2</label>
    </interactant>
    <organismsDiffer>false</organismsDiffer>
    <experiments>6</experiments>
</comment>
<comment type="interaction">
    <interactant intactId="EBI-2130415">
        <id>O00635</id>
    </interactant>
    <interactant intactId="EBI-354912">
        <id>P34931</id>
        <label>HSPA1L</label>
    </interactant>
    <organismsDiffer>false</organismsDiffer>
    <experiments>3</experiments>
</comment>
<comment type="interaction">
    <interactant intactId="EBI-2130415">
        <id>O00635</id>
    </interactant>
    <interactant intactId="EBI-356991">
        <id>P54652</id>
        <label>HSPA2</label>
    </interactant>
    <organismsDiffer>false</organismsDiffer>
    <experiments>4</experiments>
</comment>
<comment type="interaction">
    <interactant intactId="EBI-2130415">
        <id>O00635</id>
    </interactant>
    <interactant intactId="EBI-351896">
        <id>P11142</id>
        <label>HSPA8</label>
    </interactant>
    <organismsDiffer>false</organismsDiffer>
    <experiments>6</experiments>
</comment>
<comment type="interaction">
    <interactant intactId="EBI-2130415">
        <id>O00635</id>
    </interactant>
    <interactant intactId="EBI-11980301">
        <id>Q8N3F0</id>
        <label>MTURN</label>
    </interactant>
    <organismsDiffer>false</organismsDiffer>
    <experiments>3</experiments>
</comment>
<comment type="interaction">
    <interactant intactId="EBI-2130415">
        <id>O00635</id>
    </interactant>
    <interactant intactId="EBI-473160">
        <id>Q8N2W9</id>
        <label>PIAS4</label>
    </interactant>
    <organismsDiffer>false</organismsDiffer>
    <experiments>3</experiments>
</comment>
<comment type="interaction">
    <interactant intactId="EBI-2130415">
        <id>O00635</id>
    </interactant>
    <interactant intactId="EBI-359310">
        <id>P25789</id>
        <label>PSMA4</label>
    </interactant>
    <organismsDiffer>false</organismsDiffer>
    <experiments>3</experiments>
</comment>
<comment type="interaction">
    <interactant intactId="EBI-2130415">
        <id>O00635</id>
    </interactant>
    <interactant intactId="EBI-712376">
        <id>P40937</id>
        <label>RFC5</label>
    </interactant>
    <organismsDiffer>false</organismsDiffer>
    <experiments>8</experiments>
</comment>
<comment type="interaction">
    <interactant intactId="EBI-2130415">
        <id>O00635</id>
    </interactant>
    <interactant intactId="EBI-2340927">
        <id>P78317</id>
        <label>RNF4</label>
    </interactant>
    <organismsDiffer>false</organismsDiffer>
    <experiments>3</experiments>
</comment>
<comment type="interaction">
    <interactant intactId="EBI-2130415">
        <id>O00635</id>
    </interactant>
    <interactant intactId="EBI-727004">
        <id>O00560</id>
        <label>SDCBP</label>
    </interactant>
    <organismsDiffer>false</organismsDiffer>
    <experiments>3</experiments>
</comment>
<comment type="interaction">
    <interactant intactId="EBI-2130415">
        <id>O00635</id>
    </interactant>
    <interactant intactId="EBI-960169">
        <id>P61764</id>
        <label>STXBP1</label>
    </interactant>
    <organismsDiffer>false</organismsDiffer>
    <experiments>9</experiments>
</comment>
<comment type="interaction">
    <interactant intactId="EBI-2130415">
        <id>O00635</id>
    </interactant>
    <interactant intactId="EBI-710310">
        <id>Q15560</id>
        <label>TCEA2</label>
    </interactant>
    <organismsDiffer>false</organismsDiffer>
    <experiments>3</experiments>
</comment>
<comment type="interaction">
    <interactant intactId="EBI-2130415">
        <id>O00635</id>
    </interactant>
    <interactant intactId="EBI-308511">
        <id>Q9UJ04</id>
        <label>TSPYL4</label>
    </interactant>
    <organismsDiffer>false</organismsDiffer>
    <experiments>6</experiments>
</comment>
<comment type="interaction">
    <interactant intactId="EBI-2130415">
        <id>O00635</id>
    </interactant>
    <interactant intactId="EBI-10180829">
        <id>Q7KZS0</id>
        <label>UBE2I</label>
    </interactant>
    <organismsDiffer>false</organismsDiffer>
    <experiments>6</experiments>
</comment>
<comment type="interaction">
    <interactant intactId="EBI-2130415">
        <id>O00635</id>
    </interactant>
    <interactant intactId="EBI-745775">
        <id>Q96H86</id>
        <label>ZNF764</label>
    </interactant>
    <organismsDiffer>false</organismsDiffer>
    <experiments>3</experiments>
</comment>
<comment type="subcellular location">
    <subcellularLocation>
        <location evidence="1">Cytoplasm</location>
    </subcellularLocation>
</comment>
<comment type="tissue specificity">
    <text evidence="7">Ubiquitous.</text>
</comment>
<sequence length="465" mass="53416">MASTTSTKKMMEEATCSICLSLMTNPVSINCGHSYCHLCITDFFKNPSQKQLRQETFCCPQCRAPFHMDSLRPNKQLGSLIEALKETDQEMSCEEHGEQFHLFCEDEGQLICWRCERAPQHKGHTTALVEDVCQGYKEKLQKAVTKLKQLEDRCTEQKLSTAMRITKWKEKVQIQRQKIRSDFKNLQCFLHEEEKSYLWRLEKEEQQTLSRLRDYEAGLGLKSNELKSHILELEEKCQGSAQKLLQNVNDTLSRSWAVKLETSEAVSLELHTMCNVSKLYFDVKKMLRSHQVSVTLDPDTAHHELILSEDRRQVTRGYTQENQDTSSRRFTAFPCVLGCEGFTSGRRYFEVDVGEGTGWDLGVCMENVQRGTGMKQEPQSGFWTLRLCKKKGYVALTSPPTSLHLHEQPLLVGIFLDYEAGVVSFYNGNTGCHIFTFPKASFSDTLRPYFQVYQYSPLFLPPPGD</sequence>
<dbReference type="EC" id="2.3.2.27" evidence="11"/>
<dbReference type="EMBL" id="U91328">
    <property type="protein sequence ID" value="AAB82084.1"/>
    <property type="molecule type" value="Genomic_DNA"/>
</dbReference>
<dbReference type="EMBL" id="U90547">
    <property type="protein sequence ID" value="AAB53425.1"/>
    <property type="molecule type" value="mRNA"/>
</dbReference>
<dbReference type="EMBL" id="AK313248">
    <property type="protein sequence ID" value="BAG36059.1"/>
    <property type="molecule type" value="mRNA"/>
</dbReference>
<dbReference type="EMBL" id="BC026930">
    <property type="protein sequence ID" value="AAH26930.1"/>
    <property type="molecule type" value="mRNA"/>
</dbReference>
<dbReference type="CCDS" id="CCDS4568.1"/>
<dbReference type="RefSeq" id="NP_006346.1">
    <property type="nucleotide sequence ID" value="NM_006355.5"/>
</dbReference>
<dbReference type="RefSeq" id="XP_005248856.1">
    <property type="nucleotide sequence ID" value="XM_005248799.4"/>
</dbReference>
<dbReference type="RefSeq" id="XP_005248857.1">
    <property type="nucleotide sequence ID" value="XM_005248800.4"/>
</dbReference>
<dbReference type="RefSeq" id="XP_054210007.1">
    <property type="nucleotide sequence ID" value="XM_054354032.1"/>
</dbReference>
<dbReference type="RefSeq" id="XP_054210008.1">
    <property type="nucleotide sequence ID" value="XM_054354033.1"/>
</dbReference>
<dbReference type="RefSeq" id="XP_054210009.1">
    <property type="nucleotide sequence ID" value="XM_054354034.1"/>
</dbReference>
<dbReference type="SMR" id="O00635"/>
<dbReference type="BioGRID" id="115738">
    <property type="interactions" value="55"/>
</dbReference>
<dbReference type="FunCoup" id="O00635">
    <property type="interactions" value="67"/>
</dbReference>
<dbReference type="IntAct" id="O00635">
    <property type="interactions" value="24"/>
</dbReference>
<dbReference type="MINT" id="O00635"/>
<dbReference type="STRING" id="9606.ENSP00000349596"/>
<dbReference type="GlyGen" id="O00635">
    <property type="glycosylation" value="2 sites, 1 O-linked glycan (1 site)"/>
</dbReference>
<dbReference type="iPTMnet" id="O00635"/>
<dbReference type="PhosphoSitePlus" id="O00635"/>
<dbReference type="BioMuta" id="TRIM38"/>
<dbReference type="jPOST" id="O00635"/>
<dbReference type="MassIVE" id="O00635"/>
<dbReference type="PaxDb" id="9606-ENSP00000349596"/>
<dbReference type="PeptideAtlas" id="O00635"/>
<dbReference type="ProteomicsDB" id="48005"/>
<dbReference type="Pumba" id="O00635"/>
<dbReference type="Antibodypedia" id="10788">
    <property type="antibodies" value="506 antibodies from 30 providers"/>
</dbReference>
<dbReference type="DNASU" id="10475"/>
<dbReference type="Ensembl" id="ENST00000357085.5">
    <property type="protein sequence ID" value="ENSP00000349596.2"/>
    <property type="gene ID" value="ENSG00000112343.11"/>
</dbReference>
<dbReference type="GeneID" id="10475"/>
<dbReference type="KEGG" id="hsa:10475"/>
<dbReference type="MANE-Select" id="ENST00000357085.5">
    <property type="protein sequence ID" value="ENSP00000349596.2"/>
    <property type="RefSeq nucleotide sequence ID" value="NM_006355.5"/>
    <property type="RefSeq protein sequence ID" value="NP_006346.1"/>
</dbReference>
<dbReference type="UCSC" id="uc003nfm.5">
    <property type="organism name" value="human"/>
</dbReference>
<dbReference type="AGR" id="HGNC:10059"/>
<dbReference type="CTD" id="10475"/>
<dbReference type="DisGeNET" id="10475"/>
<dbReference type="GeneCards" id="TRIM38"/>
<dbReference type="HGNC" id="HGNC:10059">
    <property type="gene designation" value="TRIM38"/>
</dbReference>
<dbReference type="HPA" id="ENSG00000112343">
    <property type="expression patterns" value="Low tissue specificity"/>
</dbReference>
<dbReference type="neXtProt" id="NX_O00635"/>
<dbReference type="OpenTargets" id="ENSG00000112343"/>
<dbReference type="PharmGKB" id="PA35532"/>
<dbReference type="VEuPathDB" id="HostDB:ENSG00000112343"/>
<dbReference type="eggNOG" id="KOG2177">
    <property type="taxonomic scope" value="Eukaryota"/>
</dbReference>
<dbReference type="GeneTree" id="ENSGT00940000160468"/>
<dbReference type="HOGENOM" id="CLU_013137_0_3_1"/>
<dbReference type="InParanoid" id="O00635"/>
<dbReference type="OMA" id="FRVYQHS"/>
<dbReference type="OrthoDB" id="6270329at2759"/>
<dbReference type="PAN-GO" id="O00635">
    <property type="GO annotations" value="13 GO annotations based on evolutionary models"/>
</dbReference>
<dbReference type="PhylomeDB" id="O00635"/>
<dbReference type="TreeFam" id="TF342569"/>
<dbReference type="PathwayCommons" id="O00635"/>
<dbReference type="Reactome" id="R-HSA-877300">
    <property type="pathway name" value="Interferon gamma signaling"/>
</dbReference>
<dbReference type="SignaLink" id="O00635"/>
<dbReference type="SIGNOR" id="O00635"/>
<dbReference type="UniPathway" id="UPA00143"/>
<dbReference type="UniPathway" id="UPA00886"/>
<dbReference type="BioGRID-ORCS" id="10475">
    <property type="hits" value="17 hits in 1197 CRISPR screens"/>
</dbReference>
<dbReference type="ChiTaRS" id="TRIM38">
    <property type="organism name" value="human"/>
</dbReference>
<dbReference type="GenomeRNAi" id="10475"/>
<dbReference type="Pharos" id="O00635">
    <property type="development level" value="Tbio"/>
</dbReference>
<dbReference type="PRO" id="PR:O00635"/>
<dbReference type="Proteomes" id="UP000005640">
    <property type="component" value="Chromosome 6"/>
</dbReference>
<dbReference type="RNAct" id="O00635">
    <property type="molecule type" value="protein"/>
</dbReference>
<dbReference type="Bgee" id="ENSG00000112343">
    <property type="expression patterns" value="Expressed in cardia of stomach and 206 other cell types or tissues"/>
</dbReference>
<dbReference type="ExpressionAtlas" id="O00635">
    <property type="expression patterns" value="baseline and differential"/>
</dbReference>
<dbReference type="GO" id="GO:0005737">
    <property type="term" value="C:cytoplasm"/>
    <property type="evidence" value="ECO:0000318"/>
    <property type="project" value="GO_Central"/>
</dbReference>
<dbReference type="GO" id="GO:0005829">
    <property type="term" value="C:cytosol"/>
    <property type="evidence" value="ECO:0000304"/>
    <property type="project" value="Reactome"/>
</dbReference>
<dbReference type="GO" id="GO:0003713">
    <property type="term" value="F:transcription coactivator activity"/>
    <property type="evidence" value="ECO:0000314"/>
    <property type="project" value="ARUK-UCL"/>
</dbReference>
<dbReference type="GO" id="GO:0061630">
    <property type="term" value="F:ubiquitin protein ligase activity"/>
    <property type="evidence" value="ECO:0000250"/>
    <property type="project" value="UniProtKB"/>
</dbReference>
<dbReference type="GO" id="GO:0008270">
    <property type="term" value="F:zinc ion binding"/>
    <property type="evidence" value="ECO:0007669"/>
    <property type="project" value="UniProtKB-KW"/>
</dbReference>
<dbReference type="GO" id="GO:0045087">
    <property type="term" value="P:innate immune response"/>
    <property type="evidence" value="ECO:0000318"/>
    <property type="project" value="GO_Central"/>
</dbReference>
<dbReference type="GO" id="GO:0050687">
    <property type="term" value="P:negative regulation of defense response to virus"/>
    <property type="evidence" value="ECO:0007669"/>
    <property type="project" value="Ensembl"/>
</dbReference>
<dbReference type="GO" id="GO:0043123">
    <property type="term" value="P:positive regulation of canonical NF-kappaB signal transduction"/>
    <property type="evidence" value="ECO:0000314"/>
    <property type="project" value="UniProtKB"/>
</dbReference>
<dbReference type="GO" id="GO:0051091">
    <property type="term" value="P:positive regulation of DNA-binding transcription factor activity"/>
    <property type="evidence" value="ECO:0000314"/>
    <property type="project" value="UniProtKB"/>
</dbReference>
<dbReference type="GO" id="GO:0051092">
    <property type="term" value="P:positive regulation of NF-kappaB transcription factor activity"/>
    <property type="evidence" value="ECO:0000314"/>
    <property type="project" value="UniProtKB"/>
</dbReference>
<dbReference type="GO" id="GO:0046598">
    <property type="term" value="P:positive regulation of viral entry into host cell"/>
    <property type="evidence" value="ECO:0000314"/>
    <property type="project" value="UniProtKB"/>
</dbReference>
<dbReference type="GO" id="GO:0045070">
    <property type="term" value="P:positive regulation of viral genome replication"/>
    <property type="evidence" value="ECO:0007669"/>
    <property type="project" value="Ensembl"/>
</dbReference>
<dbReference type="GO" id="GO:0043161">
    <property type="term" value="P:proteasome-mediated ubiquitin-dependent protein catabolic process"/>
    <property type="evidence" value="ECO:0007669"/>
    <property type="project" value="Ensembl"/>
</dbReference>
<dbReference type="GO" id="GO:0070936">
    <property type="term" value="P:protein K48-linked ubiquitination"/>
    <property type="evidence" value="ECO:0007669"/>
    <property type="project" value="Ensembl"/>
</dbReference>
<dbReference type="GO" id="GO:0016925">
    <property type="term" value="P:protein sumoylation"/>
    <property type="evidence" value="ECO:0007669"/>
    <property type="project" value="UniProtKB-UniPathway"/>
</dbReference>
<dbReference type="GO" id="GO:0010468">
    <property type="term" value="P:regulation of gene expression"/>
    <property type="evidence" value="ECO:0000318"/>
    <property type="project" value="GO_Central"/>
</dbReference>
<dbReference type="GO" id="GO:0032648">
    <property type="term" value="P:regulation of interferon-beta production"/>
    <property type="evidence" value="ECO:0007669"/>
    <property type="project" value="Ensembl"/>
</dbReference>
<dbReference type="GO" id="GO:0046596">
    <property type="term" value="P:regulation of viral entry into host cell"/>
    <property type="evidence" value="ECO:0000318"/>
    <property type="project" value="GO_Central"/>
</dbReference>
<dbReference type="CDD" id="cd19761">
    <property type="entry name" value="Bbox2_TRIM5-like"/>
    <property type="match status" value="1"/>
</dbReference>
<dbReference type="CDD" id="cd16600">
    <property type="entry name" value="RING-HC_TRIM38_C-IV"/>
    <property type="match status" value="1"/>
</dbReference>
<dbReference type="CDD" id="cd15815">
    <property type="entry name" value="SPRY_PRY_TRIM38"/>
    <property type="match status" value="1"/>
</dbReference>
<dbReference type="FunFam" id="2.60.120.920:FF:000072">
    <property type="entry name" value="Tripartite motif containing 38"/>
    <property type="match status" value="1"/>
</dbReference>
<dbReference type="Gene3D" id="2.60.120.920">
    <property type="match status" value="1"/>
</dbReference>
<dbReference type="Gene3D" id="3.30.160.60">
    <property type="entry name" value="Classic Zinc Finger"/>
    <property type="match status" value="1"/>
</dbReference>
<dbReference type="Gene3D" id="3.30.40.10">
    <property type="entry name" value="Zinc/RING finger domain, C3HC4 (zinc finger)"/>
    <property type="match status" value="1"/>
</dbReference>
<dbReference type="InterPro" id="IPR001870">
    <property type="entry name" value="B30.2/SPRY"/>
</dbReference>
<dbReference type="InterPro" id="IPR043136">
    <property type="entry name" value="B30.2/SPRY_sf"/>
</dbReference>
<dbReference type="InterPro" id="IPR003879">
    <property type="entry name" value="Butyrophylin_SPRY"/>
</dbReference>
<dbReference type="InterPro" id="IPR013320">
    <property type="entry name" value="ConA-like_dom_sf"/>
</dbReference>
<dbReference type="InterPro" id="IPR006574">
    <property type="entry name" value="PRY"/>
</dbReference>
<dbReference type="InterPro" id="IPR035790">
    <property type="entry name" value="SPRY/PRY_TRIM38"/>
</dbReference>
<dbReference type="InterPro" id="IPR003877">
    <property type="entry name" value="SPRY_dom"/>
</dbReference>
<dbReference type="InterPro" id="IPR050143">
    <property type="entry name" value="TRIM/RBCC"/>
</dbReference>
<dbReference type="InterPro" id="IPR000315">
    <property type="entry name" value="Znf_B-box"/>
</dbReference>
<dbReference type="InterPro" id="IPR001841">
    <property type="entry name" value="Znf_RING"/>
</dbReference>
<dbReference type="InterPro" id="IPR013083">
    <property type="entry name" value="Znf_RING/FYVE/PHD"/>
</dbReference>
<dbReference type="InterPro" id="IPR017907">
    <property type="entry name" value="Znf_RING_CS"/>
</dbReference>
<dbReference type="PANTHER" id="PTHR24103">
    <property type="entry name" value="E3 UBIQUITIN-PROTEIN LIGASE TRIM"/>
    <property type="match status" value="1"/>
</dbReference>
<dbReference type="Pfam" id="PF13765">
    <property type="entry name" value="PRY"/>
    <property type="match status" value="1"/>
</dbReference>
<dbReference type="Pfam" id="PF00622">
    <property type="entry name" value="SPRY"/>
    <property type="match status" value="1"/>
</dbReference>
<dbReference type="Pfam" id="PF00643">
    <property type="entry name" value="zf-B_box"/>
    <property type="match status" value="1"/>
</dbReference>
<dbReference type="Pfam" id="PF15227">
    <property type="entry name" value="zf-C3HC4_4"/>
    <property type="match status" value="1"/>
</dbReference>
<dbReference type="PRINTS" id="PR01407">
    <property type="entry name" value="BUTYPHLNCDUF"/>
</dbReference>
<dbReference type="SMART" id="SM00336">
    <property type="entry name" value="BBOX"/>
    <property type="match status" value="1"/>
</dbReference>
<dbReference type="SMART" id="SM00589">
    <property type="entry name" value="PRY"/>
    <property type="match status" value="1"/>
</dbReference>
<dbReference type="SMART" id="SM00184">
    <property type="entry name" value="RING"/>
    <property type="match status" value="1"/>
</dbReference>
<dbReference type="SMART" id="SM00449">
    <property type="entry name" value="SPRY"/>
    <property type="match status" value="1"/>
</dbReference>
<dbReference type="SUPFAM" id="SSF57845">
    <property type="entry name" value="B-box zinc-binding domain"/>
    <property type="match status" value="1"/>
</dbReference>
<dbReference type="SUPFAM" id="SSF49899">
    <property type="entry name" value="Concanavalin A-like lectins/glucanases"/>
    <property type="match status" value="1"/>
</dbReference>
<dbReference type="SUPFAM" id="SSF57850">
    <property type="entry name" value="RING/U-box"/>
    <property type="match status" value="1"/>
</dbReference>
<dbReference type="PROSITE" id="PS50188">
    <property type="entry name" value="B302_SPRY"/>
    <property type="match status" value="1"/>
</dbReference>
<dbReference type="PROSITE" id="PS50119">
    <property type="entry name" value="ZF_BBOX"/>
    <property type="match status" value="1"/>
</dbReference>
<dbReference type="PROSITE" id="PS00518">
    <property type="entry name" value="ZF_RING_1"/>
    <property type="match status" value="1"/>
</dbReference>
<dbReference type="PROSITE" id="PS50089">
    <property type="entry name" value="ZF_RING_2"/>
    <property type="match status" value="1"/>
</dbReference>
<proteinExistence type="evidence at protein level"/>
<keyword id="KW-0963">Cytoplasm</keyword>
<keyword id="KW-0391">Immunity</keyword>
<keyword id="KW-0399">Innate immunity</keyword>
<keyword id="KW-0479">Metal-binding</keyword>
<keyword id="KW-0597">Phosphoprotein</keyword>
<keyword id="KW-1267">Proteomics identification</keyword>
<keyword id="KW-1185">Reference proteome</keyword>
<keyword id="KW-0808">Transferase</keyword>
<keyword id="KW-0833">Ubl conjugation pathway</keyword>
<keyword id="KW-0862">Zinc</keyword>
<keyword id="KW-0863">Zinc-finger</keyword>